<organism>
    <name type="scientific">Caenorhabditis elegans</name>
    <dbReference type="NCBI Taxonomy" id="6239"/>
    <lineage>
        <taxon>Eukaryota</taxon>
        <taxon>Metazoa</taxon>
        <taxon>Ecdysozoa</taxon>
        <taxon>Nematoda</taxon>
        <taxon>Chromadorea</taxon>
        <taxon>Rhabditida</taxon>
        <taxon>Rhabditina</taxon>
        <taxon>Rhabditomorpha</taxon>
        <taxon>Rhabditoidea</taxon>
        <taxon>Rhabditidae</taxon>
        <taxon>Peloderinae</taxon>
        <taxon>Caenorhabditis</taxon>
    </lineage>
</organism>
<accession>Q7Z118</accession>
<accession>Q10947</accession>
<dbReference type="EMBL" id="FO080185">
    <property type="protein sequence ID" value="CCD61826.1"/>
    <property type="molecule type" value="Genomic_DNA"/>
</dbReference>
<dbReference type="RefSeq" id="NP_001021124.2">
    <property type="nucleotide sequence ID" value="NM_001025953.5"/>
</dbReference>
<dbReference type="SMR" id="Q7Z118"/>
<dbReference type="STRING" id="6239.B0361.11.1"/>
<dbReference type="PaxDb" id="6239-B0361.11"/>
<dbReference type="EnsemblMetazoa" id="B0361.11.1">
    <property type="protein sequence ID" value="B0361.11.1"/>
    <property type="gene ID" value="WBGene00015165"/>
</dbReference>
<dbReference type="GeneID" id="3565709"/>
<dbReference type="KEGG" id="cel:CELE_B0361.11"/>
<dbReference type="UCSC" id="B0361.11">
    <property type="organism name" value="c. elegans"/>
</dbReference>
<dbReference type="AGR" id="WB:WBGene00015165"/>
<dbReference type="CTD" id="3565709"/>
<dbReference type="WormBase" id="B0361.11">
    <property type="protein sequence ID" value="CE43666"/>
    <property type="gene ID" value="WBGene00015165"/>
</dbReference>
<dbReference type="eggNOG" id="KOG0255">
    <property type="taxonomic scope" value="Eukaryota"/>
</dbReference>
<dbReference type="HOGENOM" id="CLU_001265_33_4_1"/>
<dbReference type="InParanoid" id="Q7Z118"/>
<dbReference type="OMA" id="CQQSSHH"/>
<dbReference type="OrthoDB" id="3936150at2759"/>
<dbReference type="PhylomeDB" id="Q7Z118"/>
<dbReference type="Reactome" id="R-CEL-112311">
    <property type="pathway name" value="Neurotransmitter clearance"/>
</dbReference>
<dbReference type="Reactome" id="R-CEL-181430">
    <property type="pathway name" value="Norepinephrine Neurotransmitter Release Cycle"/>
</dbReference>
<dbReference type="Reactome" id="R-CEL-200425">
    <property type="pathway name" value="Carnitine shuttle"/>
</dbReference>
<dbReference type="Reactome" id="R-CEL-2161517">
    <property type="pathway name" value="Abacavir transmembrane transport"/>
</dbReference>
<dbReference type="Reactome" id="R-CEL-442660">
    <property type="pathway name" value="Na+/Cl- dependent neurotransmitter transporters"/>
</dbReference>
<dbReference type="Reactome" id="R-CEL-549127">
    <property type="pathway name" value="Organic cation transport"/>
</dbReference>
<dbReference type="Reactome" id="R-CEL-561048">
    <property type="pathway name" value="Organic anion transport"/>
</dbReference>
<dbReference type="Reactome" id="R-CEL-9749641">
    <property type="pathway name" value="Aspirin ADME"/>
</dbReference>
<dbReference type="Reactome" id="R-CEL-9793528">
    <property type="pathway name" value="Ciprofloxacin ADME"/>
</dbReference>
<dbReference type="PRO" id="PR:Q7Z118"/>
<dbReference type="Proteomes" id="UP000001940">
    <property type="component" value="Chromosome III"/>
</dbReference>
<dbReference type="Bgee" id="WBGene00015165">
    <property type="expression patterns" value="Expressed in adult organism and 1 other cell type or tissue"/>
</dbReference>
<dbReference type="GO" id="GO:0016020">
    <property type="term" value="C:membrane"/>
    <property type="evidence" value="ECO:0007669"/>
    <property type="project" value="UniProtKB-SubCell"/>
</dbReference>
<dbReference type="GO" id="GO:0022857">
    <property type="term" value="F:transmembrane transporter activity"/>
    <property type="evidence" value="ECO:0007669"/>
    <property type="project" value="InterPro"/>
</dbReference>
<dbReference type="CDD" id="cd17317">
    <property type="entry name" value="MFS_SLC22"/>
    <property type="match status" value="1"/>
</dbReference>
<dbReference type="Gene3D" id="1.20.1250.20">
    <property type="entry name" value="MFS general substrate transporter like domains"/>
    <property type="match status" value="1"/>
</dbReference>
<dbReference type="InterPro" id="IPR020846">
    <property type="entry name" value="MFS_dom"/>
</dbReference>
<dbReference type="InterPro" id="IPR005828">
    <property type="entry name" value="MFS_sugar_transport-like"/>
</dbReference>
<dbReference type="InterPro" id="IPR036259">
    <property type="entry name" value="MFS_trans_sf"/>
</dbReference>
<dbReference type="InterPro" id="IPR005829">
    <property type="entry name" value="Sugar_transporter_CS"/>
</dbReference>
<dbReference type="PANTHER" id="PTHR24064">
    <property type="entry name" value="SOLUTE CARRIER FAMILY 22 MEMBER"/>
    <property type="match status" value="1"/>
</dbReference>
<dbReference type="Pfam" id="PF00083">
    <property type="entry name" value="Sugar_tr"/>
    <property type="match status" value="1"/>
</dbReference>
<dbReference type="SUPFAM" id="SSF103473">
    <property type="entry name" value="MFS general substrate transporter"/>
    <property type="match status" value="1"/>
</dbReference>
<dbReference type="PROSITE" id="PS50850">
    <property type="entry name" value="MFS"/>
    <property type="match status" value="1"/>
</dbReference>
<dbReference type="PROSITE" id="PS00216">
    <property type="entry name" value="SUGAR_TRANSPORT_1"/>
    <property type="match status" value="1"/>
</dbReference>
<comment type="subcellular location">
    <subcellularLocation>
        <location evidence="3">Membrane</location>
        <topology evidence="3">Multi-pass membrane protein</topology>
    </subcellularLocation>
</comment>
<comment type="similarity">
    <text evidence="3">Belongs to the major facilitator superfamily. Sugar transporter (TC 2.A.1.1) family.</text>
</comment>
<evidence type="ECO:0000255" key="1"/>
<evidence type="ECO:0000256" key="2">
    <source>
        <dbReference type="SAM" id="MobiDB-lite"/>
    </source>
</evidence>
<evidence type="ECO:0000305" key="3"/>
<feature type="chain" id="PRO_0000050465" description="Putative transporter B0361.11">
    <location>
        <begin position="1"/>
        <end position="578"/>
    </location>
</feature>
<feature type="transmembrane region" description="Helical" evidence="1">
    <location>
        <begin position="51"/>
        <end position="71"/>
    </location>
</feature>
<feature type="transmembrane region" description="Helical" evidence="1">
    <location>
        <begin position="148"/>
        <end position="168"/>
    </location>
</feature>
<feature type="transmembrane region" description="Helical" evidence="1">
    <location>
        <begin position="182"/>
        <end position="202"/>
    </location>
</feature>
<feature type="transmembrane region" description="Helical" evidence="1">
    <location>
        <begin position="232"/>
        <end position="252"/>
    </location>
</feature>
<feature type="transmembrane region" description="Helical" evidence="1">
    <location>
        <begin position="263"/>
        <end position="283"/>
    </location>
</feature>
<feature type="transmembrane region" description="Helical" evidence="1">
    <location>
        <begin position="339"/>
        <end position="359"/>
    </location>
</feature>
<feature type="transmembrane region" description="Helical" evidence="1">
    <location>
        <begin position="373"/>
        <end position="393"/>
    </location>
</feature>
<feature type="transmembrane region" description="Helical" evidence="1">
    <location>
        <begin position="399"/>
        <end position="419"/>
    </location>
</feature>
<feature type="transmembrane region" description="Helical" evidence="1">
    <location>
        <begin position="426"/>
        <end position="446"/>
    </location>
</feature>
<feature type="transmembrane region" description="Helical" evidence="1">
    <location>
        <begin position="457"/>
        <end position="477"/>
    </location>
</feature>
<feature type="transmembrane region" description="Helical" evidence="1">
    <location>
        <begin position="486"/>
        <end position="506"/>
    </location>
</feature>
<feature type="region of interest" description="Disordered" evidence="2">
    <location>
        <begin position="1"/>
        <end position="30"/>
    </location>
</feature>
<feature type="region of interest" description="Disordered" evidence="2">
    <location>
        <begin position="532"/>
        <end position="561"/>
    </location>
</feature>
<feature type="compositionally biased region" description="Low complexity" evidence="2">
    <location>
        <begin position="532"/>
        <end position="550"/>
    </location>
</feature>
<name>YMPB_CAEEL</name>
<gene>
    <name type="ORF">B0361.11</name>
</gene>
<proteinExistence type="inferred from homology"/>
<sequence length="578" mass="65675">MSISRRSYEQFDEMKSENQENNSKKKSSERLKKLDPDKFVEAYGAYGKYQIFTYVLVQTLNFFYSSSMYIMSFVQLNLEKQCEYKNETIPISETCQIETESSKAFGNLNGEYCGIAENTLVNVTNQKASTNLLVDFDLSCSHWFFQEFGLTIFTIGAVIAVPFMSMLADRYGRKPIIVTTAILAFLANMAASFSPNFAIFLILRAFIGACSDSYLSVASVATCEYLSEKARAWITVVYNVAWSLGMVWTLLVTLMTDDWRWRYFIVSLPGVYGFALWYFLPESPHWLITKNKTEKLKKYIKTANRVNNVSPEFNDCQQSSHHEEKHESFKALLGSKKLIWLLFANGFIEMVISLVYFAISFMSVELGGDQVQAFLYSSLIEIPAGLAVIPLMMKMGRKMIVIWCLVFQTLALIGVTVFLDSYEFKLVIMLVAKVMATIIYSVHPIWATEQFPTSVRSLCFSLMNIPQSMGIIMSPYVKHIVMSPNWIPFVVIALFSFISATLAFMLHETKNKKLPTDIESLSYPSETNDLSAYRRSKSSSSSVSALSKTSVRSKKTLSSESVSKKLDTVNFSDKEYRI</sequence>
<protein>
    <recommendedName>
        <fullName>Putative transporter B0361.11</fullName>
    </recommendedName>
</protein>
<keyword id="KW-0472">Membrane</keyword>
<keyword id="KW-1185">Reference proteome</keyword>
<keyword id="KW-0762">Sugar transport</keyword>
<keyword id="KW-0812">Transmembrane</keyword>
<keyword id="KW-1133">Transmembrane helix</keyword>
<keyword id="KW-0813">Transport</keyword>
<reference key="1">
    <citation type="journal article" date="1998" name="Science">
        <title>Genome sequence of the nematode C. elegans: a platform for investigating biology.</title>
        <authorList>
            <consortium name="The C. elegans sequencing consortium"/>
        </authorList>
    </citation>
    <scope>NUCLEOTIDE SEQUENCE [LARGE SCALE GENOMIC DNA]</scope>
    <source>
        <strain>Bristol N2</strain>
    </source>
</reference>